<gene>
    <name evidence="1" type="primary">rny</name>
    <name type="ordered locus">DP2870</name>
</gene>
<organism>
    <name type="scientific">Desulfotalea psychrophila (strain LSv54 / DSM 12343)</name>
    <dbReference type="NCBI Taxonomy" id="177439"/>
    <lineage>
        <taxon>Bacteria</taxon>
        <taxon>Pseudomonadati</taxon>
        <taxon>Thermodesulfobacteriota</taxon>
        <taxon>Desulfobulbia</taxon>
        <taxon>Desulfobulbales</taxon>
        <taxon>Desulfocapsaceae</taxon>
        <taxon>Desulfotalea</taxon>
    </lineage>
</organism>
<evidence type="ECO:0000255" key="1">
    <source>
        <dbReference type="HAMAP-Rule" id="MF_00335"/>
    </source>
</evidence>
<evidence type="ECO:0000255" key="2">
    <source>
        <dbReference type="PROSITE-ProRule" id="PRU01175"/>
    </source>
</evidence>
<sequence>MFFIEHPFVYLGLDLIVGCLIGFFLRKQLVERQQQNIQAQSKQIIENAIIDAEQLKKEALLQSKEEVYQIKQSLEAEVKLERDDLKDEHRQLKKQRDNIKRENERFEKRQSRHVVAEKALERRLREVDVKHEEADNEILKQRDELARIAGITQDEAKKLLMESIESEAQMDAAKRLSKIENEMKLEADRKARSILALAICRYAGDYVADKTVSMVPLPSDEMKGRIIGREGRNIRAIEAATGIDIIIDDTPEAVILSGFNPVRREVARLALIQLISDGRIHPGRIEEVVEKVSKELDEVMCEAGEQATFDVGAHGVHVELIKLLGRLRYRTSYGQNVLQHSLEVAFLCGIMAAELGIDVKMAKRAGLLHDIGKAVDHEVEGSHAVIGRDLAKKYGEPDEIVYAIGAHHADQPPKSVLDILVQAADALSGARPGARKEMLQSYVKRLEDLEAIANKFPGVDKSYAIQAGRDLRIIADAQKISDAEATLLSRNIAASIEEKLTYPGQIRVTVIRETRSVEYAK</sequence>
<accession>Q6AJ81</accession>
<reference key="1">
    <citation type="journal article" date="2004" name="Environ. Microbiol.">
        <title>The genome of Desulfotalea psychrophila, a sulfate-reducing bacterium from permanently cold Arctic sediments.</title>
        <authorList>
            <person name="Rabus R."/>
            <person name="Ruepp A."/>
            <person name="Frickey T."/>
            <person name="Rattei T."/>
            <person name="Fartmann B."/>
            <person name="Stark M."/>
            <person name="Bauer M."/>
            <person name="Zibat A."/>
            <person name="Lombardot T."/>
            <person name="Becker I."/>
            <person name="Amann J."/>
            <person name="Gellner K."/>
            <person name="Teeling H."/>
            <person name="Leuschner W.D."/>
            <person name="Gloeckner F.-O."/>
            <person name="Lupas A.N."/>
            <person name="Amann R."/>
            <person name="Klenk H.-P."/>
        </authorList>
    </citation>
    <scope>NUCLEOTIDE SEQUENCE [LARGE SCALE GENOMIC DNA]</scope>
    <source>
        <strain>DSM 12343 / LSv54</strain>
    </source>
</reference>
<name>RNY_DESPS</name>
<proteinExistence type="inferred from homology"/>
<protein>
    <recommendedName>
        <fullName evidence="1">Ribonuclease Y</fullName>
        <shortName evidence="1">RNase Y</shortName>
        <ecNumber evidence="1">3.1.-.-</ecNumber>
    </recommendedName>
</protein>
<feature type="chain" id="PRO_0000344865" description="Ribonuclease Y">
    <location>
        <begin position="1"/>
        <end position="521"/>
    </location>
</feature>
<feature type="transmembrane region" description="Helical" evidence="1">
    <location>
        <begin position="1"/>
        <end position="21"/>
    </location>
</feature>
<feature type="domain" description="KH" evidence="1">
    <location>
        <begin position="211"/>
        <end position="271"/>
    </location>
</feature>
<feature type="domain" description="HD" evidence="2">
    <location>
        <begin position="337"/>
        <end position="430"/>
    </location>
</feature>
<keyword id="KW-1003">Cell membrane</keyword>
<keyword id="KW-0255">Endonuclease</keyword>
<keyword id="KW-0378">Hydrolase</keyword>
<keyword id="KW-0472">Membrane</keyword>
<keyword id="KW-0540">Nuclease</keyword>
<keyword id="KW-1185">Reference proteome</keyword>
<keyword id="KW-0694">RNA-binding</keyword>
<keyword id="KW-0812">Transmembrane</keyword>
<keyword id="KW-1133">Transmembrane helix</keyword>
<comment type="function">
    <text evidence="1">Endoribonuclease that initiates mRNA decay.</text>
</comment>
<comment type="subcellular location">
    <subcellularLocation>
        <location evidence="1">Cell membrane</location>
        <topology evidence="1">Single-pass membrane protein</topology>
    </subcellularLocation>
</comment>
<comment type="similarity">
    <text evidence="1">Belongs to the RNase Y family.</text>
</comment>
<dbReference type="EC" id="3.1.-.-" evidence="1"/>
<dbReference type="EMBL" id="CR522870">
    <property type="protein sequence ID" value="CAG37599.1"/>
    <property type="molecule type" value="Genomic_DNA"/>
</dbReference>
<dbReference type="RefSeq" id="WP_011190111.1">
    <property type="nucleotide sequence ID" value="NC_006138.1"/>
</dbReference>
<dbReference type="SMR" id="Q6AJ81"/>
<dbReference type="STRING" id="177439.DP2870"/>
<dbReference type="KEGG" id="dps:DP2870"/>
<dbReference type="eggNOG" id="COG1418">
    <property type="taxonomic scope" value="Bacteria"/>
</dbReference>
<dbReference type="HOGENOM" id="CLU_028328_1_0_7"/>
<dbReference type="OrthoDB" id="9803205at2"/>
<dbReference type="Proteomes" id="UP000000602">
    <property type="component" value="Chromosome"/>
</dbReference>
<dbReference type="GO" id="GO:0005886">
    <property type="term" value="C:plasma membrane"/>
    <property type="evidence" value="ECO:0007669"/>
    <property type="project" value="UniProtKB-SubCell"/>
</dbReference>
<dbReference type="GO" id="GO:0003723">
    <property type="term" value="F:RNA binding"/>
    <property type="evidence" value="ECO:0007669"/>
    <property type="project" value="UniProtKB-UniRule"/>
</dbReference>
<dbReference type="GO" id="GO:0004521">
    <property type="term" value="F:RNA endonuclease activity"/>
    <property type="evidence" value="ECO:0007669"/>
    <property type="project" value="UniProtKB-UniRule"/>
</dbReference>
<dbReference type="GO" id="GO:0006402">
    <property type="term" value="P:mRNA catabolic process"/>
    <property type="evidence" value="ECO:0007669"/>
    <property type="project" value="UniProtKB-UniRule"/>
</dbReference>
<dbReference type="CDD" id="cd00077">
    <property type="entry name" value="HDc"/>
    <property type="match status" value="1"/>
</dbReference>
<dbReference type="CDD" id="cd22431">
    <property type="entry name" value="KH-I_RNaseY"/>
    <property type="match status" value="1"/>
</dbReference>
<dbReference type="FunFam" id="1.10.3210.10:FF:000022">
    <property type="entry name" value="Ribonuclease Y"/>
    <property type="match status" value="1"/>
</dbReference>
<dbReference type="Gene3D" id="1.10.3210.10">
    <property type="entry name" value="Hypothetical protein af1432"/>
    <property type="match status" value="1"/>
</dbReference>
<dbReference type="Gene3D" id="3.30.1370.10">
    <property type="entry name" value="K Homology domain, type 1"/>
    <property type="match status" value="1"/>
</dbReference>
<dbReference type="HAMAP" id="MF_00335">
    <property type="entry name" value="RNase_Y"/>
    <property type="match status" value="1"/>
</dbReference>
<dbReference type="InterPro" id="IPR003607">
    <property type="entry name" value="HD/PDEase_dom"/>
</dbReference>
<dbReference type="InterPro" id="IPR006674">
    <property type="entry name" value="HD_domain"/>
</dbReference>
<dbReference type="InterPro" id="IPR006675">
    <property type="entry name" value="HDIG_dom"/>
</dbReference>
<dbReference type="InterPro" id="IPR004087">
    <property type="entry name" value="KH_dom"/>
</dbReference>
<dbReference type="InterPro" id="IPR004088">
    <property type="entry name" value="KH_dom_type_1"/>
</dbReference>
<dbReference type="InterPro" id="IPR036612">
    <property type="entry name" value="KH_dom_type_1_sf"/>
</dbReference>
<dbReference type="InterPro" id="IPR017705">
    <property type="entry name" value="Ribonuclease_Y"/>
</dbReference>
<dbReference type="InterPro" id="IPR022711">
    <property type="entry name" value="RNase_Y_N"/>
</dbReference>
<dbReference type="NCBIfam" id="TIGR00277">
    <property type="entry name" value="HDIG"/>
    <property type="match status" value="1"/>
</dbReference>
<dbReference type="NCBIfam" id="TIGR03319">
    <property type="entry name" value="RNase_Y"/>
    <property type="match status" value="1"/>
</dbReference>
<dbReference type="PANTHER" id="PTHR12826">
    <property type="entry name" value="RIBONUCLEASE Y"/>
    <property type="match status" value="1"/>
</dbReference>
<dbReference type="PANTHER" id="PTHR12826:SF15">
    <property type="entry name" value="RIBONUCLEASE Y"/>
    <property type="match status" value="1"/>
</dbReference>
<dbReference type="Pfam" id="PF01966">
    <property type="entry name" value="HD"/>
    <property type="match status" value="1"/>
</dbReference>
<dbReference type="Pfam" id="PF00013">
    <property type="entry name" value="KH_1"/>
    <property type="match status" value="1"/>
</dbReference>
<dbReference type="Pfam" id="PF12072">
    <property type="entry name" value="RNase_Y_N"/>
    <property type="match status" value="1"/>
</dbReference>
<dbReference type="SMART" id="SM00471">
    <property type="entry name" value="HDc"/>
    <property type="match status" value="1"/>
</dbReference>
<dbReference type="SMART" id="SM00322">
    <property type="entry name" value="KH"/>
    <property type="match status" value="1"/>
</dbReference>
<dbReference type="SUPFAM" id="SSF54791">
    <property type="entry name" value="Eukaryotic type KH-domain (KH-domain type I)"/>
    <property type="match status" value="1"/>
</dbReference>
<dbReference type="SUPFAM" id="SSF109604">
    <property type="entry name" value="HD-domain/PDEase-like"/>
    <property type="match status" value="1"/>
</dbReference>
<dbReference type="PROSITE" id="PS51831">
    <property type="entry name" value="HD"/>
    <property type="match status" value="1"/>
</dbReference>
<dbReference type="PROSITE" id="PS50084">
    <property type="entry name" value="KH_TYPE_1"/>
    <property type="match status" value="1"/>
</dbReference>